<keyword id="KW-0066">ATP synthesis</keyword>
<keyword id="KW-1003">Cell membrane</keyword>
<keyword id="KW-0139">CF(1)</keyword>
<keyword id="KW-0375">Hydrogen ion transport</keyword>
<keyword id="KW-0406">Ion transport</keyword>
<keyword id="KW-0472">Membrane</keyword>
<keyword id="KW-1185">Reference proteome</keyword>
<keyword id="KW-0813">Transport</keyword>
<reference key="1">
    <citation type="journal article" date="2001" name="Proc. Natl. Acad. Sci. U.S.A.">
        <title>Genome sequence of an industrial microorganism Streptomyces avermitilis: deducing the ability of producing secondary metabolites.</title>
        <authorList>
            <person name="Omura S."/>
            <person name="Ikeda H."/>
            <person name="Ishikawa J."/>
            <person name="Hanamoto A."/>
            <person name="Takahashi C."/>
            <person name="Shinose M."/>
            <person name="Takahashi Y."/>
            <person name="Horikawa H."/>
            <person name="Nakazawa H."/>
            <person name="Osonoe T."/>
            <person name="Kikuchi H."/>
            <person name="Shiba T."/>
            <person name="Sakaki Y."/>
            <person name="Hattori M."/>
        </authorList>
    </citation>
    <scope>NUCLEOTIDE SEQUENCE [LARGE SCALE GENOMIC DNA]</scope>
    <source>
        <strain>ATCC 31267 / DSM 46492 / JCM 5070 / NBRC 14893 / NCIMB 12804 / NRRL 8165 / MA-4680</strain>
    </source>
</reference>
<reference key="2">
    <citation type="journal article" date="2003" name="Nat. Biotechnol.">
        <title>Complete genome sequence and comparative analysis of the industrial microorganism Streptomyces avermitilis.</title>
        <authorList>
            <person name="Ikeda H."/>
            <person name="Ishikawa J."/>
            <person name="Hanamoto A."/>
            <person name="Shinose M."/>
            <person name="Kikuchi H."/>
            <person name="Shiba T."/>
            <person name="Sakaki Y."/>
            <person name="Hattori M."/>
            <person name="Omura S."/>
        </authorList>
    </citation>
    <scope>NUCLEOTIDE SEQUENCE [LARGE SCALE GENOMIC DNA]</scope>
    <source>
        <strain>ATCC 31267 / DSM 46492 / JCM 5070 / NBRC 14893 / NCIMB 12804 / NRRL 8165 / MA-4680</strain>
    </source>
</reference>
<protein>
    <recommendedName>
        <fullName evidence="1">ATP synthase epsilon chain</fullName>
    </recommendedName>
    <alternativeName>
        <fullName evidence="1">ATP synthase F1 sector epsilon subunit</fullName>
    </alternativeName>
    <alternativeName>
        <fullName evidence="1">F-ATPase epsilon subunit</fullName>
    </alternativeName>
</protein>
<name>ATPE_STRAW</name>
<feature type="chain" id="PRO_0000188212" description="ATP synthase epsilon chain">
    <location>
        <begin position="1"/>
        <end position="124"/>
    </location>
</feature>
<dbReference type="EMBL" id="BA000030">
    <property type="protein sequence ID" value="BAC70591.1"/>
    <property type="molecule type" value="Genomic_DNA"/>
</dbReference>
<dbReference type="RefSeq" id="WP_010984312.1">
    <property type="nucleotide sequence ID" value="NZ_JZJK01000041.1"/>
</dbReference>
<dbReference type="SMR" id="Q82J85"/>
<dbReference type="GeneID" id="41539966"/>
<dbReference type="KEGG" id="sma:SAVERM_2880"/>
<dbReference type="eggNOG" id="COG0355">
    <property type="taxonomic scope" value="Bacteria"/>
</dbReference>
<dbReference type="HOGENOM" id="CLU_084338_1_3_11"/>
<dbReference type="OrthoDB" id="9791445at2"/>
<dbReference type="Proteomes" id="UP000000428">
    <property type="component" value="Chromosome"/>
</dbReference>
<dbReference type="GO" id="GO:0005886">
    <property type="term" value="C:plasma membrane"/>
    <property type="evidence" value="ECO:0007669"/>
    <property type="project" value="UniProtKB-SubCell"/>
</dbReference>
<dbReference type="GO" id="GO:0045259">
    <property type="term" value="C:proton-transporting ATP synthase complex"/>
    <property type="evidence" value="ECO:0007669"/>
    <property type="project" value="UniProtKB-KW"/>
</dbReference>
<dbReference type="GO" id="GO:0005524">
    <property type="term" value="F:ATP binding"/>
    <property type="evidence" value="ECO:0007669"/>
    <property type="project" value="UniProtKB-UniRule"/>
</dbReference>
<dbReference type="GO" id="GO:0046933">
    <property type="term" value="F:proton-transporting ATP synthase activity, rotational mechanism"/>
    <property type="evidence" value="ECO:0007669"/>
    <property type="project" value="UniProtKB-UniRule"/>
</dbReference>
<dbReference type="CDD" id="cd12152">
    <property type="entry name" value="F1-ATPase_delta"/>
    <property type="match status" value="1"/>
</dbReference>
<dbReference type="Gene3D" id="2.60.15.10">
    <property type="entry name" value="F0F1 ATP synthase delta/epsilon subunit, N-terminal"/>
    <property type="match status" value="1"/>
</dbReference>
<dbReference type="HAMAP" id="MF_00530">
    <property type="entry name" value="ATP_synth_epsil_bac"/>
    <property type="match status" value="1"/>
</dbReference>
<dbReference type="InterPro" id="IPR001469">
    <property type="entry name" value="ATP_synth_F1_dsu/esu"/>
</dbReference>
<dbReference type="InterPro" id="IPR020546">
    <property type="entry name" value="ATP_synth_F1_dsu/esu_N"/>
</dbReference>
<dbReference type="InterPro" id="IPR036771">
    <property type="entry name" value="ATPsynth_dsu/esu_N"/>
</dbReference>
<dbReference type="NCBIfam" id="TIGR01216">
    <property type="entry name" value="ATP_synt_epsi"/>
    <property type="match status" value="1"/>
</dbReference>
<dbReference type="NCBIfam" id="NF009977">
    <property type="entry name" value="PRK13442.1"/>
    <property type="match status" value="1"/>
</dbReference>
<dbReference type="PANTHER" id="PTHR13822">
    <property type="entry name" value="ATP SYNTHASE DELTA/EPSILON CHAIN"/>
    <property type="match status" value="1"/>
</dbReference>
<dbReference type="PANTHER" id="PTHR13822:SF10">
    <property type="entry name" value="ATP SYNTHASE EPSILON CHAIN, CHLOROPLASTIC"/>
    <property type="match status" value="1"/>
</dbReference>
<dbReference type="Pfam" id="PF02823">
    <property type="entry name" value="ATP-synt_DE_N"/>
    <property type="match status" value="1"/>
</dbReference>
<dbReference type="SUPFAM" id="SSF51344">
    <property type="entry name" value="Epsilon subunit of F1F0-ATP synthase N-terminal domain"/>
    <property type="match status" value="1"/>
</dbReference>
<proteinExistence type="inferred from homology"/>
<gene>
    <name evidence="1" type="primary">atpC</name>
    <name type="ordered locus">SAV_2880</name>
</gene>
<accession>Q82J85</accession>
<comment type="function">
    <text evidence="1">Produces ATP from ADP in the presence of a proton gradient across the membrane.</text>
</comment>
<comment type="subunit">
    <text>F-type ATPases have 2 components, CF(1) - the catalytic core - and CF(0) - the membrane proton channel. CF(1) has five subunits: alpha(3), beta(3), gamma(1), delta(1), epsilon(1). CF(0) has three main subunits: a, b and c.</text>
</comment>
<comment type="subcellular location">
    <subcellularLocation>
        <location evidence="1">Cell membrane</location>
        <topology evidence="1">Peripheral membrane protein</topology>
    </subcellularLocation>
</comment>
<comment type="similarity">
    <text evidence="1">Belongs to the ATPase epsilon chain family.</text>
</comment>
<evidence type="ECO:0000255" key="1">
    <source>
        <dbReference type="HAMAP-Rule" id="MF_00530"/>
    </source>
</evidence>
<sequence>MAAELHVELVAADRQVWSGEATLVVARTTSGDIGVMPGHQPLLGVLESGPVTIRTSDGETVVAAVHGGFISFADNKLSLLAEIAELADEIDAQRAERELERAKAEGDATAERRADVRLRAVSAR</sequence>
<organism>
    <name type="scientific">Streptomyces avermitilis (strain ATCC 31267 / DSM 46492 / JCM 5070 / NBRC 14893 / NCIMB 12804 / NRRL 8165 / MA-4680)</name>
    <dbReference type="NCBI Taxonomy" id="227882"/>
    <lineage>
        <taxon>Bacteria</taxon>
        <taxon>Bacillati</taxon>
        <taxon>Actinomycetota</taxon>
        <taxon>Actinomycetes</taxon>
        <taxon>Kitasatosporales</taxon>
        <taxon>Streptomycetaceae</taxon>
        <taxon>Streptomyces</taxon>
    </lineage>
</organism>